<evidence type="ECO:0000255" key="1">
    <source>
        <dbReference type="HAMAP-Rule" id="MF_01026"/>
    </source>
</evidence>
<dbReference type="EC" id="4.2.1.33" evidence="1"/>
<dbReference type="EMBL" id="CP000970">
    <property type="protein sequence ID" value="ACB18186.1"/>
    <property type="molecule type" value="Genomic_DNA"/>
</dbReference>
<dbReference type="RefSeq" id="WP_001140652.1">
    <property type="nucleotide sequence ID" value="NC_010498.1"/>
</dbReference>
<dbReference type="SMR" id="B1LG09"/>
<dbReference type="GeneID" id="75202111"/>
<dbReference type="KEGG" id="ecm:EcSMS35_0077"/>
<dbReference type="HOGENOM" id="CLU_006714_3_4_6"/>
<dbReference type="UniPathway" id="UPA00048">
    <property type="reaction ID" value="UER00071"/>
</dbReference>
<dbReference type="Proteomes" id="UP000007011">
    <property type="component" value="Chromosome"/>
</dbReference>
<dbReference type="GO" id="GO:0003861">
    <property type="term" value="F:3-isopropylmalate dehydratase activity"/>
    <property type="evidence" value="ECO:0007669"/>
    <property type="project" value="UniProtKB-UniRule"/>
</dbReference>
<dbReference type="GO" id="GO:0051539">
    <property type="term" value="F:4 iron, 4 sulfur cluster binding"/>
    <property type="evidence" value="ECO:0007669"/>
    <property type="project" value="UniProtKB-KW"/>
</dbReference>
<dbReference type="GO" id="GO:0046872">
    <property type="term" value="F:metal ion binding"/>
    <property type="evidence" value="ECO:0007669"/>
    <property type="project" value="UniProtKB-KW"/>
</dbReference>
<dbReference type="GO" id="GO:0009098">
    <property type="term" value="P:L-leucine biosynthetic process"/>
    <property type="evidence" value="ECO:0007669"/>
    <property type="project" value="UniProtKB-UniRule"/>
</dbReference>
<dbReference type="CDD" id="cd01583">
    <property type="entry name" value="IPMI"/>
    <property type="match status" value="1"/>
</dbReference>
<dbReference type="FunFam" id="3.30.499.10:FF:000006">
    <property type="entry name" value="3-isopropylmalate dehydratase large subunit"/>
    <property type="match status" value="1"/>
</dbReference>
<dbReference type="FunFam" id="3.30.499.10:FF:000007">
    <property type="entry name" value="3-isopropylmalate dehydratase large subunit"/>
    <property type="match status" value="1"/>
</dbReference>
<dbReference type="Gene3D" id="3.30.499.10">
    <property type="entry name" value="Aconitase, domain 3"/>
    <property type="match status" value="2"/>
</dbReference>
<dbReference type="HAMAP" id="MF_01026">
    <property type="entry name" value="LeuC_type1"/>
    <property type="match status" value="1"/>
</dbReference>
<dbReference type="InterPro" id="IPR004430">
    <property type="entry name" value="3-IsopropMal_deHydase_lsu"/>
</dbReference>
<dbReference type="InterPro" id="IPR015931">
    <property type="entry name" value="Acnase/IPM_dHydase_lsu_aba_1/3"/>
</dbReference>
<dbReference type="InterPro" id="IPR001030">
    <property type="entry name" value="Acoase/IPM_deHydtase_lsu_aba"/>
</dbReference>
<dbReference type="InterPro" id="IPR018136">
    <property type="entry name" value="Aconitase_4Fe-4S_BS"/>
</dbReference>
<dbReference type="InterPro" id="IPR036008">
    <property type="entry name" value="Aconitase_4Fe-4S_dom"/>
</dbReference>
<dbReference type="InterPro" id="IPR050067">
    <property type="entry name" value="IPM_dehydratase_rel_enz"/>
</dbReference>
<dbReference type="InterPro" id="IPR033941">
    <property type="entry name" value="IPMI_cat"/>
</dbReference>
<dbReference type="NCBIfam" id="TIGR00170">
    <property type="entry name" value="leuC"/>
    <property type="match status" value="1"/>
</dbReference>
<dbReference type="NCBIfam" id="NF004016">
    <property type="entry name" value="PRK05478.1"/>
    <property type="match status" value="1"/>
</dbReference>
<dbReference type="NCBIfam" id="NF009116">
    <property type="entry name" value="PRK12466.1"/>
    <property type="match status" value="1"/>
</dbReference>
<dbReference type="PANTHER" id="PTHR43822:SF9">
    <property type="entry name" value="3-ISOPROPYLMALATE DEHYDRATASE"/>
    <property type="match status" value="1"/>
</dbReference>
<dbReference type="PANTHER" id="PTHR43822">
    <property type="entry name" value="HOMOACONITASE, MITOCHONDRIAL-RELATED"/>
    <property type="match status" value="1"/>
</dbReference>
<dbReference type="Pfam" id="PF00330">
    <property type="entry name" value="Aconitase"/>
    <property type="match status" value="1"/>
</dbReference>
<dbReference type="PRINTS" id="PR00415">
    <property type="entry name" value="ACONITASE"/>
</dbReference>
<dbReference type="SUPFAM" id="SSF53732">
    <property type="entry name" value="Aconitase iron-sulfur domain"/>
    <property type="match status" value="1"/>
</dbReference>
<dbReference type="PROSITE" id="PS00450">
    <property type="entry name" value="ACONITASE_1"/>
    <property type="match status" value="1"/>
</dbReference>
<dbReference type="PROSITE" id="PS01244">
    <property type="entry name" value="ACONITASE_2"/>
    <property type="match status" value="1"/>
</dbReference>
<proteinExistence type="inferred from homology"/>
<feature type="chain" id="PRO_1000135685" description="3-isopropylmalate dehydratase large subunit">
    <location>
        <begin position="1"/>
        <end position="466"/>
    </location>
</feature>
<feature type="binding site" evidence="1">
    <location>
        <position position="347"/>
    </location>
    <ligand>
        <name>[4Fe-4S] cluster</name>
        <dbReference type="ChEBI" id="CHEBI:49883"/>
    </ligand>
</feature>
<feature type="binding site" evidence="1">
    <location>
        <position position="407"/>
    </location>
    <ligand>
        <name>[4Fe-4S] cluster</name>
        <dbReference type="ChEBI" id="CHEBI:49883"/>
    </ligand>
</feature>
<feature type="binding site" evidence="1">
    <location>
        <position position="410"/>
    </location>
    <ligand>
        <name>[4Fe-4S] cluster</name>
        <dbReference type="ChEBI" id="CHEBI:49883"/>
    </ligand>
</feature>
<reference key="1">
    <citation type="journal article" date="2008" name="J. Bacteriol.">
        <title>Insights into the environmental resistance gene pool from the genome sequence of the multidrug-resistant environmental isolate Escherichia coli SMS-3-5.</title>
        <authorList>
            <person name="Fricke W.F."/>
            <person name="Wright M.S."/>
            <person name="Lindell A.H."/>
            <person name="Harkins D.M."/>
            <person name="Baker-Austin C."/>
            <person name="Ravel J."/>
            <person name="Stepanauskas R."/>
        </authorList>
    </citation>
    <scope>NUCLEOTIDE SEQUENCE [LARGE SCALE GENOMIC DNA]</scope>
    <source>
        <strain>SMS-3-5 / SECEC</strain>
    </source>
</reference>
<organism>
    <name type="scientific">Escherichia coli (strain SMS-3-5 / SECEC)</name>
    <dbReference type="NCBI Taxonomy" id="439855"/>
    <lineage>
        <taxon>Bacteria</taxon>
        <taxon>Pseudomonadati</taxon>
        <taxon>Pseudomonadota</taxon>
        <taxon>Gammaproteobacteria</taxon>
        <taxon>Enterobacterales</taxon>
        <taxon>Enterobacteriaceae</taxon>
        <taxon>Escherichia</taxon>
    </lineage>
</organism>
<protein>
    <recommendedName>
        <fullName evidence="1">3-isopropylmalate dehydratase large subunit</fullName>
        <ecNumber evidence="1">4.2.1.33</ecNumber>
    </recommendedName>
    <alternativeName>
        <fullName evidence="1">Alpha-IPM isomerase</fullName>
        <shortName evidence="1">IPMI</shortName>
    </alternativeName>
    <alternativeName>
        <fullName evidence="1">Isopropylmalate isomerase</fullName>
    </alternativeName>
</protein>
<comment type="function">
    <text evidence="1">Catalyzes the isomerization between 2-isopropylmalate and 3-isopropylmalate, via the formation of 2-isopropylmaleate.</text>
</comment>
<comment type="catalytic activity">
    <reaction evidence="1">
        <text>(2R,3S)-3-isopropylmalate = (2S)-2-isopropylmalate</text>
        <dbReference type="Rhea" id="RHEA:32287"/>
        <dbReference type="ChEBI" id="CHEBI:1178"/>
        <dbReference type="ChEBI" id="CHEBI:35121"/>
        <dbReference type="EC" id="4.2.1.33"/>
    </reaction>
</comment>
<comment type="cofactor">
    <cofactor evidence="1">
        <name>[4Fe-4S] cluster</name>
        <dbReference type="ChEBI" id="CHEBI:49883"/>
    </cofactor>
    <text evidence="1">Binds 1 [4Fe-4S] cluster per subunit.</text>
</comment>
<comment type="pathway">
    <text evidence="1">Amino-acid biosynthesis; L-leucine biosynthesis; L-leucine from 3-methyl-2-oxobutanoate: step 2/4.</text>
</comment>
<comment type="subunit">
    <text evidence="1">Heterodimer of LeuC and LeuD.</text>
</comment>
<comment type="similarity">
    <text evidence="1">Belongs to the aconitase/IPM isomerase family. LeuC type 1 subfamily.</text>
</comment>
<name>LEUC_ECOSM</name>
<sequence>MAKTLYEKLFDAHVVYEAENETPLLYIDRHLVHEVTSPQAFDGLRAHGRPVRQPGKTFATMDHNVSTQTKDINACGEMARIQMQELIKNCKEFGVELYDLNHPYQGIVHVMGPEQGVTLPGMTIVCGDSHTATHGAFGALAFGIGTSEVEHVLATQTLKQGRAKTMKIEVQGKAAPGITAKDIVLAIIGKTGSAGGTGHVVEFCGEAIRDLSMEGRMTLCNMAIEMGAKAGLVAPDETTFNYVKGRLHAPKGKDFDDAVAYWKTLQTDEGATFDTVVTLQAEEISPQVTWGTNPGQVISVNDNIPDPASFADPVERASAEKALAYMGLKPGIPLTEVAIDKVFIGSCTNSRIEDLRAAAEIAKGRKVAPGVQALVVPGSGPVKAQAEAEGLDKIFIEAGFEWRLPGCSMCLAMNNDRLNPGERCASTSNRNFEGRQGRGGRTHLVSPAMAAAAAVTGHFADIRNIK</sequence>
<keyword id="KW-0004">4Fe-4S</keyword>
<keyword id="KW-0028">Amino-acid biosynthesis</keyword>
<keyword id="KW-0100">Branched-chain amino acid biosynthesis</keyword>
<keyword id="KW-0408">Iron</keyword>
<keyword id="KW-0411">Iron-sulfur</keyword>
<keyword id="KW-0432">Leucine biosynthesis</keyword>
<keyword id="KW-0456">Lyase</keyword>
<keyword id="KW-0479">Metal-binding</keyword>
<accession>B1LG09</accession>
<gene>
    <name evidence="1" type="primary">leuC</name>
    <name type="ordered locus">EcSMS35_0077</name>
</gene>